<gene>
    <name evidence="1" type="primary">rnfD</name>
    <name type="ordered locus">KPK_2381</name>
</gene>
<dbReference type="EC" id="7.-.-.-" evidence="1"/>
<dbReference type="EMBL" id="CP000964">
    <property type="protein sequence ID" value="ACI07510.1"/>
    <property type="molecule type" value="Genomic_DNA"/>
</dbReference>
<dbReference type="SMR" id="B5XWP8"/>
<dbReference type="KEGG" id="kpe:KPK_2381"/>
<dbReference type="HOGENOM" id="CLU_042020_0_0_6"/>
<dbReference type="Proteomes" id="UP000001734">
    <property type="component" value="Chromosome"/>
</dbReference>
<dbReference type="GO" id="GO:0005886">
    <property type="term" value="C:plasma membrane"/>
    <property type="evidence" value="ECO:0007669"/>
    <property type="project" value="UniProtKB-SubCell"/>
</dbReference>
<dbReference type="GO" id="GO:0022900">
    <property type="term" value="P:electron transport chain"/>
    <property type="evidence" value="ECO:0007669"/>
    <property type="project" value="UniProtKB-UniRule"/>
</dbReference>
<dbReference type="GO" id="GO:0055085">
    <property type="term" value="P:transmembrane transport"/>
    <property type="evidence" value="ECO:0007669"/>
    <property type="project" value="InterPro"/>
</dbReference>
<dbReference type="HAMAP" id="MF_00462">
    <property type="entry name" value="RsxD_RnfD"/>
    <property type="match status" value="1"/>
</dbReference>
<dbReference type="InterPro" id="IPR004338">
    <property type="entry name" value="NqrB/RnfD"/>
</dbReference>
<dbReference type="InterPro" id="IPR011303">
    <property type="entry name" value="RnfD_bac"/>
</dbReference>
<dbReference type="NCBIfam" id="NF002011">
    <property type="entry name" value="PRK00816.1"/>
    <property type="match status" value="1"/>
</dbReference>
<dbReference type="NCBIfam" id="TIGR01946">
    <property type="entry name" value="rnfD"/>
    <property type="match status" value="1"/>
</dbReference>
<dbReference type="PANTHER" id="PTHR30578">
    <property type="entry name" value="ELECTRON TRANSPORT COMPLEX PROTEIN RNFD"/>
    <property type="match status" value="1"/>
</dbReference>
<dbReference type="PANTHER" id="PTHR30578:SF0">
    <property type="entry name" value="ION-TRANSLOCATING OXIDOREDUCTASE COMPLEX SUBUNIT D"/>
    <property type="match status" value="1"/>
</dbReference>
<dbReference type="Pfam" id="PF03116">
    <property type="entry name" value="NQR2_RnfD_RnfE"/>
    <property type="match status" value="1"/>
</dbReference>
<proteinExistence type="inferred from homology"/>
<comment type="function">
    <text evidence="1">Part of a membrane-bound complex that couples electron transfer with translocation of ions across the membrane.</text>
</comment>
<comment type="cofactor">
    <cofactor evidence="1">
        <name>FMN</name>
        <dbReference type="ChEBI" id="CHEBI:58210"/>
    </cofactor>
</comment>
<comment type="subunit">
    <text evidence="1">The complex is composed of six subunits: RnfA, RnfB, RnfC, RnfD, RnfE and RnfG.</text>
</comment>
<comment type="subcellular location">
    <subcellularLocation>
        <location evidence="1">Cell inner membrane</location>
        <topology evidence="1">Multi-pass membrane protein</topology>
    </subcellularLocation>
</comment>
<comment type="similarity">
    <text evidence="1">Belongs to the NqrB/RnfD family.</text>
</comment>
<accession>B5XWP8</accession>
<organism>
    <name type="scientific">Klebsiella pneumoniae (strain 342)</name>
    <dbReference type="NCBI Taxonomy" id="507522"/>
    <lineage>
        <taxon>Bacteria</taxon>
        <taxon>Pseudomonadati</taxon>
        <taxon>Pseudomonadota</taxon>
        <taxon>Gammaproteobacteria</taxon>
        <taxon>Enterobacterales</taxon>
        <taxon>Enterobacteriaceae</taxon>
        <taxon>Klebsiella/Raoultella group</taxon>
        <taxon>Klebsiella</taxon>
        <taxon>Klebsiella pneumoniae complex</taxon>
    </lineage>
</organism>
<keyword id="KW-0997">Cell inner membrane</keyword>
<keyword id="KW-1003">Cell membrane</keyword>
<keyword id="KW-0249">Electron transport</keyword>
<keyword id="KW-0285">Flavoprotein</keyword>
<keyword id="KW-0288">FMN</keyword>
<keyword id="KW-0472">Membrane</keyword>
<keyword id="KW-0597">Phosphoprotein</keyword>
<keyword id="KW-1278">Translocase</keyword>
<keyword id="KW-0812">Transmembrane</keyword>
<keyword id="KW-1133">Transmembrane helix</keyword>
<keyword id="KW-0813">Transport</keyword>
<protein>
    <recommendedName>
        <fullName evidence="1">Ion-translocating oxidoreductase complex subunit D</fullName>
        <ecNumber evidence="1">7.-.-.-</ecNumber>
    </recommendedName>
    <alternativeName>
        <fullName evidence="1">Rnf electron transport complex subunit D</fullName>
    </alternativeName>
</protein>
<sequence length="350" mass="37941">MVFRIASSPYTHNQRQTSRIMLLVLLAAVPGIVVQTWFFGWGTVLQIVLAALTAWATEAAILKLRKQHIVATLKDNSALLTGLLLAVSIPPLAPWWMVVLGTAFAVVIAKQLYGGLGHNPFNPAMIGYVVLLISFPVQMTSWLPSYEIAAQVPAFSDVLQMIFTGHTAAGGDMASLRLGIDGISQATPLDTFKTSLHAGHSVQQVLQLPVYGGVLAGLGWQWVNIAWLAGGLFLLWQKAIRWHIPVSFLLSLGLCATLGWLFSPHSLASPQMHLFSGATMLGAFFILTDPVTASTTNRGRLIFGALAGLLVWLIRSFGGYPDGVAFAVLLANITVPLIDYYTRPRVYGHR</sequence>
<evidence type="ECO:0000255" key="1">
    <source>
        <dbReference type="HAMAP-Rule" id="MF_00462"/>
    </source>
</evidence>
<reference key="1">
    <citation type="journal article" date="2008" name="PLoS Genet.">
        <title>Complete genome sequence of the N2-fixing broad host range endophyte Klebsiella pneumoniae 342 and virulence predictions verified in mice.</title>
        <authorList>
            <person name="Fouts D.E."/>
            <person name="Tyler H.L."/>
            <person name="DeBoy R.T."/>
            <person name="Daugherty S."/>
            <person name="Ren Q."/>
            <person name="Badger J.H."/>
            <person name="Durkin A.S."/>
            <person name="Huot H."/>
            <person name="Shrivastava S."/>
            <person name="Kothari S."/>
            <person name="Dodson R.J."/>
            <person name="Mohamoud Y."/>
            <person name="Khouri H."/>
            <person name="Roesch L.F.W."/>
            <person name="Krogfelt K.A."/>
            <person name="Struve C."/>
            <person name="Triplett E.W."/>
            <person name="Methe B.A."/>
        </authorList>
    </citation>
    <scope>NUCLEOTIDE SEQUENCE [LARGE SCALE GENOMIC DNA]</scope>
    <source>
        <strain>342</strain>
    </source>
</reference>
<feature type="chain" id="PRO_1000125388" description="Ion-translocating oxidoreductase complex subunit D">
    <location>
        <begin position="1"/>
        <end position="350"/>
    </location>
</feature>
<feature type="transmembrane region" description="Helical" evidence="1">
    <location>
        <begin position="20"/>
        <end position="40"/>
    </location>
</feature>
<feature type="transmembrane region" description="Helical" evidence="1">
    <location>
        <begin position="42"/>
        <end position="62"/>
    </location>
</feature>
<feature type="transmembrane region" description="Helical" evidence="1">
    <location>
        <begin position="89"/>
        <end position="109"/>
    </location>
</feature>
<feature type="transmembrane region" description="Helical" evidence="1">
    <location>
        <begin position="123"/>
        <end position="143"/>
    </location>
</feature>
<feature type="transmembrane region" description="Helical" evidence="1">
    <location>
        <begin position="214"/>
        <end position="234"/>
    </location>
</feature>
<feature type="transmembrane region" description="Helical" evidence="1">
    <location>
        <begin position="242"/>
        <end position="262"/>
    </location>
</feature>
<feature type="transmembrane region" description="Helical" evidence="1">
    <location>
        <begin position="267"/>
        <end position="287"/>
    </location>
</feature>
<feature type="transmembrane region" description="Helical" evidence="1">
    <location>
        <begin position="301"/>
        <end position="321"/>
    </location>
</feature>
<feature type="transmembrane region" description="Helical" evidence="1">
    <location>
        <begin position="322"/>
        <end position="342"/>
    </location>
</feature>
<feature type="modified residue" description="FMN phosphoryl threonine" evidence="1">
    <location>
        <position position="187"/>
    </location>
</feature>
<name>RNFD_KLEP3</name>